<name>DEOB_SHESW</name>
<gene>
    <name evidence="1" type="primary">deoB</name>
    <name type="ordered locus">Sputw3181_1191</name>
</gene>
<organism>
    <name type="scientific">Shewanella sp. (strain W3-18-1)</name>
    <dbReference type="NCBI Taxonomy" id="351745"/>
    <lineage>
        <taxon>Bacteria</taxon>
        <taxon>Pseudomonadati</taxon>
        <taxon>Pseudomonadota</taxon>
        <taxon>Gammaproteobacteria</taxon>
        <taxon>Alteromonadales</taxon>
        <taxon>Shewanellaceae</taxon>
        <taxon>Shewanella</taxon>
    </lineage>
</organism>
<comment type="function">
    <text evidence="1">Isomerase that catalyzes the conversion of deoxy-ribose 1-phosphate (dRib-1-P) and ribose 1-phosphate (Rib-1-P) to deoxy-ribose 5-phosphate (dRib-5-P) and ribose 5-phosphate (Rib-5-P), respectively.</text>
</comment>
<comment type="catalytic activity">
    <reaction evidence="1">
        <text>2-deoxy-alpha-D-ribose 1-phosphate = 2-deoxy-D-ribose 5-phosphate</text>
        <dbReference type="Rhea" id="RHEA:27658"/>
        <dbReference type="ChEBI" id="CHEBI:57259"/>
        <dbReference type="ChEBI" id="CHEBI:62877"/>
        <dbReference type="EC" id="5.4.2.7"/>
    </reaction>
</comment>
<comment type="catalytic activity">
    <reaction evidence="1">
        <text>alpha-D-ribose 1-phosphate = D-ribose 5-phosphate</text>
        <dbReference type="Rhea" id="RHEA:18793"/>
        <dbReference type="ChEBI" id="CHEBI:57720"/>
        <dbReference type="ChEBI" id="CHEBI:78346"/>
        <dbReference type="EC" id="5.4.2.7"/>
    </reaction>
</comment>
<comment type="cofactor">
    <cofactor evidence="1">
        <name>Mn(2+)</name>
        <dbReference type="ChEBI" id="CHEBI:29035"/>
    </cofactor>
    <text evidence="1">Binds 2 manganese ions.</text>
</comment>
<comment type="pathway">
    <text evidence="1">Carbohydrate degradation; 2-deoxy-D-ribose 1-phosphate degradation; D-glyceraldehyde 3-phosphate and acetaldehyde from 2-deoxy-alpha-D-ribose 1-phosphate: step 1/2.</text>
</comment>
<comment type="subcellular location">
    <subcellularLocation>
        <location evidence="1">Cytoplasm</location>
    </subcellularLocation>
</comment>
<comment type="similarity">
    <text evidence="1">Belongs to the phosphopentomutase family.</text>
</comment>
<protein>
    <recommendedName>
        <fullName evidence="1">Phosphopentomutase</fullName>
        <ecNumber evidence="1">5.4.2.7</ecNumber>
    </recommendedName>
    <alternativeName>
        <fullName evidence="1">Phosphodeoxyribomutase</fullName>
    </alternativeName>
</protein>
<accession>A1RH89</accession>
<evidence type="ECO:0000255" key="1">
    <source>
        <dbReference type="HAMAP-Rule" id="MF_00740"/>
    </source>
</evidence>
<reference key="1">
    <citation type="submission" date="2006-12" db="EMBL/GenBank/DDBJ databases">
        <title>Complete sequence of Shewanella sp. W3-18-1.</title>
        <authorList>
            <consortium name="US DOE Joint Genome Institute"/>
            <person name="Copeland A."/>
            <person name="Lucas S."/>
            <person name="Lapidus A."/>
            <person name="Barry K."/>
            <person name="Detter J.C."/>
            <person name="Glavina del Rio T."/>
            <person name="Hammon N."/>
            <person name="Israni S."/>
            <person name="Dalin E."/>
            <person name="Tice H."/>
            <person name="Pitluck S."/>
            <person name="Chain P."/>
            <person name="Malfatti S."/>
            <person name="Shin M."/>
            <person name="Vergez L."/>
            <person name="Schmutz J."/>
            <person name="Larimer F."/>
            <person name="Land M."/>
            <person name="Hauser L."/>
            <person name="Kyrpides N."/>
            <person name="Lykidis A."/>
            <person name="Tiedje J."/>
            <person name="Richardson P."/>
        </authorList>
    </citation>
    <scope>NUCLEOTIDE SEQUENCE [LARGE SCALE GENOMIC DNA]</scope>
    <source>
        <strain>W3-18-1</strain>
    </source>
</reference>
<proteinExistence type="inferred from homology"/>
<dbReference type="EC" id="5.4.2.7" evidence="1"/>
<dbReference type="EMBL" id="CP000503">
    <property type="protein sequence ID" value="ABM24034.1"/>
    <property type="molecule type" value="Genomic_DNA"/>
</dbReference>
<dbReference type="RefSeq" id="WP_011788542.1">
    <property type="nucleotide sequence ID" value="NC_008750.1"/>
</dbReference>
<dbReference type="SMR" id="A1RH89"/>
<dbReference type="KEGG" id="shw:Sputw3181_1191"/>
<dbReference type="HOGENOM" id="CLU_053861_0_0_6"/>
<dbReference type="UniPathway" id="UPA00002">
    <property type="reaction ID" value="UER00467"/>
</dbReference>
<dbReference type="Proteomes" id="UP000002597">
    <property type="component" value="Chromosome"/>
</dbReference>
<dbReference type="GO" id="GO:0005829">
    <property type="term" value="C:cytosol"/>
    <property type="evidence" value="ECO:0007669"/>
    <property type="project" value="TreeGrafter"/>
</dbReference>
<dbReference type="GO" id="GO:0000287">
    <property type="term" value="F:magnesium ion binding"/>
    <property type="evidence" value="ECO:0007669"/>
    <property type="project" value="InterPro"/>
</dbReference>
<dbReference type="GO" id="GO:0030145">
    <property type="term" value="F:manganese ion binding"/>
    <property type="evidence" value="ECO:0007669"/>
    <property type="project" value="UniProtKB-UniRule"/>
</dbReference>
<dbReference type="GO" id="GO:0008973">
    <property type="term" value="F:phosphopentomutase activity"/>
    <property type="evidence" value="ECO:0007669"/>
    <property type="project" value="UniProtKB-UniRule"/>
</dbReference>
<dbReference type="GO" id="GO:0006018">
    <property type="term" value="P:2-deoxyribose 1-phosphate catabolic process"/>
    <property type="evidence" value="ECO:0007669"/>
    <property type="project" value="UniProtKB-UniRule"/>
</dbReference>
<dbReference type="GO" id="GO:0006015">
    <property type="term" value="P:5-phosphoribose 1-diphosphate biosynthetic process"/>
    <property type="evidence" value="ECO:0007669"/>
    <property type="project" value="UniProtKB-UniPathway"/>
</dbReference>
<dbReference type="GO" id="GO:0043094">
    <property type="term" value="P:metabolic compound salvage"/>
    <property type="evidence" value="ECO:0007669"/>
    <property type="project" value="InterPro"/>
</dbReference>
<dbReference type="GO" id="GO:0009117">
    <property type="term" value="P:nucleotide metabolic process"/>
    <property type="evidence" value="ECO:0007669"/>
    <property type="project" value="InterPro"/>
</dbReference>
<dbReference type="CDD" id="cd16009">
    <property type="entry name" value="PPM"/>
    <property type="match status" value="1"/>
</dbReference>
<dbReference type="FunFam" id="3.30.70.1250:FF:000001">
    <property type="entry name" value="Phosphopentomutase"/>
    <property type="match status" value="1"/>
</dbReference>
<dbReference type="Gene3D" id="3.40.720.10">
    <property type="entry name" value="Alkaline Phosphatase, subunit A"/>
    <property type="match status" value="1"/>
</dbReference>
<dbReference type="Gene3D" id="3.30.70.1250">
    <property type="entry name" value="Phosphopentomutase"/>
    <property type="match status" value="1"/>
</dbReference>
<dbReference type="HAMAP" id="MF_00740">
    <property type="entry name" value="Phosphopentomut"/>
    <property type="match status" value="1"/>
</dbReference>
<dbReference type="InterPro" id="IPR017850">
    <property type="entry name" value="Alkaline_phosphatase_core_sf"/>
</dbReference>
<dbReference type="InterPro" id="IPR010045">
    <property type="entry name" value="DeoB"/>
</dbReference>
<dbReference type="InterPro" id="IPR006124">
    <property type="entry name" value="Metalloenzyme"/>
</dbReference>
<dbReference type="InterPro" id="IPR024052">
    <property type="entry name" value="Phosphopentomutase_DeoB_cap_sf"/>
</dbReference>
<dbReference type="NCBIfam" id="TIGR01696">
    <property type="entry name" value="deoB"/>
    <property type="match status" value="1"/>
</dbReference>
<dbReference type="NCBIfam" id="NF003766">
    <property type="entry name" value="PRK05362.1"/>
    <property type="match status" value="1"/>
</dbReference>
<dbReference type="PANTHER" id="PTHR21110">
    <property type="entry name" value="PHOSPHOPENTOMUTASE"/>
    <property type="match status" value="1"/>
</dbReference>
<dbReference type="PANTHER" id="PTHR21110:SF0">
    <property type="entry name" value="PHOSPHOPENTOMUTASE"/>
    <property type="match status" value="1"/>
</dbReference>
<dbReference type="Pfam" id="PF01676">
    <property type="entry name" value="Metalloenzyme"/>
    <property type="match status" value="1"/>
</dbReference>
<dbReference type="PIRSF" id="PIRSF001491">
    <property type="entry name" value="Ppentomutase"/>
    <property type="match status" value="1"/>
</dbReference>
<dbReference type="SUPFAM" id="SSF53649">
    <property type="entry name" value="Alkaline phosphatase-like"/>
    <property type="match status" value="1"/>
</dbReference>
<dbReference type="SUPFAM" id="SSF143856">
    <property type="entry name" value="DeoB insert domain-like"/>
    <property type="match status" value="1"/>
</dbReference>
<feature type="chain" id="PRO_1000046403" description="Phosphopentomutase">
    <location>
        <begin position="1"/>
        <end position="404"/>
    </location>
</feature>
<feature type="binding site" evidence="1">
    <location>
        <position position="10"/>
    </location>
    <ligand>
        <name>Mn(2+)</name>
        <dbReference type="ChEBI" id="CHEBI:29035"/>
        <label>1</label>
    </ligand>
</feature>
<feature type="binding site" evidence="1">
    <location>
        <position position="303"/>
    </location>
    <ligand>
        <name>Mn(2+)</name>
        <dbReference type="ChEBI" id="CHEBI:29035"/>
        <label>2</label>
    </ligand>
</feature>
<feature type="binding site" evidence="1">
    <location>
        <position position="308"/>
    </location>
    <ligand>
        <name>Mn(2+)</name>
        <dbReference type="ChEBI" id="CHEBI:29035"/>
        <label>2</label>
    </ligand>
</feature>
<feature type="binding site" evidence="1">
    <location>
        <position position="344"/>
    </location>
    <ligand>
        <name>Mn(2+)</name>
        <dbReference type="ChEBI" id="CHEBI:29035"/>
        <label>1</label>
    </ligand>
</feature>
<feature type="binding site" evidence="1">
    <location>
        <position position="345"/>
    </location>
    <ligand>
        <name>Mn(2+)</name>
        <dbReference type="ChEBI" id="CHEBI:29035"/>
        <label>1</label>
    </ligand>
</feature>
<feature type="binding site" evidence="1">
    <location>
        <position position="356"/>
    </location>
    <ligand>
        <name>Mn(2+)</name>
        <dbReference type="ChEBI" id="CHEBI:29035"/>
        <label>2</label>
    </ligand>
</feature>
<keyword id="KW-0963">Cytoplasm</keyword>
<keyword id="KW-0413">Isomerase</keyword>
<keyword id="KW-0464">Manganese</keyword>
<keyword id="KW-0479">Metal-binding</keyword>
<sequence>MKRTIIMMLDSFGVGASADAASFGDVGSDTFGHIAKACAEGKADIGREGPLKLPNLARLGLGHAAMESTGAFAPGFGDNVELIGAYGHAQELSSGKDTPSGHWEMAGVPVLFEWGYFSEHQNSFPKELTDKILARAGLDGFLGNCHASGTTILEELGEEHMRSGKPIFYTSADSVFQIACHEETFGLDNLYRLCEITREELAPYNIGRVIARPFNGTGPSDFARTGNRKDYSLEPPAKTVLDKLKAAGGEVVSVGKIADIYAYCGITKKVKANGLEDLFDATLAEVKSAGDNTIVFTNFVDFDSHYGHRRDVAGYAKGLEYFDARLPEMLALLGEDDLLILTADHGCDPTWQGTDHTREYVPVLAYGAGLKAGSLGRRNSFADIGQSIASHFKLEPMAYGESFI</sequence>